<keyword id="KW-0479">Metal-binding</keyword>
<keyword id="KW-0862">Zinc</keyword>
<gene>
    <name evidence="1" type="primary">yacG</name>
    <name type="ordered locus">KPN78578_01030</name>
    <name type="ORF">KPN_00104</name>
</gene>
<accession>A6T4P3</accession>
<dbReference type="EMBL" id="CP000647">
    <property type="protein sequence ID" value="ABR75564.1"/>
    <property type="molecule type" value="Genomic_DNA"/>
</dbReference>
<dbReference type="RefSeq" id="WP_002888644.1">
    <property type="nucleotide sequence ID" value="NC_009648.1"/>
</dbReference>
<dbReference type="SMR" id="A6T4P3"/>
<dbReference type="STRING" id="272620.KPN_00104"/>
<dbReference type="PaxDb" id="272620-KPN_00104"/>
<dbReference type="EnsemblBacteria" id="ABR75564">
    <property type="protein sequence ID" value="ABR75564"/>
    <property type="gene ID" value="KPN_00104"/>
</dbReference>
<dbReference type="KEGG" id="kpn:KPN_00104"/>
<dbReference type="HOGENOM" id="CLU_178280_3_1_6"/>
<dbReference type="Proteomes" id="UP000000265">
    <property type="component" value="Chromosome"/>
</dbReference>
<dbReference type="GO" id="GO:0008657">
    <property type="term" value="F:DNA topoisomerase type II (double strand cut, ATP-hydrolyzing) inhibitor activity"/>
    <property type="evidence" value="ECO:0007669"/>
    <property type="project" value="UniProtKB-UniRule"/>
</dbReference>
<dbReference type="GO" id="GO:0008270">
    <property type="term" value="F:zinc ion binding"/>
    <property type="evidence" value="ECO:0007669"/>
    <property type="project" value="UniProtKB-UniRule"/>
</dbReference>
<dbReference type="GO" id="GO:0006355">
    <property type="term" value="P:regulation of DNA-templated transcription"/>
    <property type="evidence" value="ECO:0007669"/>
    <property type="project" value="InterPro"/>
</dbReference>
<dbReference type="Gene3D" id="3.30.50.10">
    <property type="entry name" value="Erythroid Transcription Factor GATA-1, subunit A"/>
    <property type="match status" value="1"/>
</dbReference>
<dbReference type="HAMAP" id="MF_00649">
    <property type="entry name" value="DNA_gyrase_inhibitor_YacG"/>
    <property type="match status" value="1"/>
</dbReference>
<dbReference type="InterPro" id="IPR005584">
    <property type="entry name" value="DNA_gyrase_inhibitor_YacG"/>
</dbReference>
<dbReference type="InterPro" id="IPR013088">
    <property type="entry name" value="Znf_NHR/GATA"/>
</dbReference>
<dbReference type="NCBIfam" id="NF001638">
    <property type="entry name" value="PRK00418.1"/>
    <property type="match status" value="1"/>
</dbReference>
<dbReference type="PANTHER" id="PTHR36150">
    <property type="entry name" value="DNA GYRASE INHIBITOR YACG"/>
    <property type="match status" value="1"/>
</dbReference>
<dbReference type="PANTHER" id="PTHR36150:SF1">
    <property type="entry name" value="DNA GYRASE INHIBITOR YACG"/>
    <property type="match status" value="1"/>
</dbReference>
<dbReference type="Pfam" id="PF03884">
    <property type="entry name" value="YacG"/>
    <property type="match status" value="1"/>
</dbReference>
<dbReference type="SUPFAM" id="SSF57716">
    <property type="entry name" value="Glucocorticoid receptor-like (DNA-binding domain)"/>
    <property type="match status" value="1"/>
</dbReference>
<name>YACG_KLEP7</name>
<organism>
    <name type="scientific">Klebsiella pneumoniae subsp. pneumoniae (strain ATCC 700721 / MGH 78578)</name>
    <dbReference type="NCBI Taxonomy" id="272620"/>
    <lineage>
        <taxon>Bacteria</taxon>
        <taxon>Pseudomonadati</taxon>
        <taxon>Pseudomonadota</taxon>
        <taxon>Gammaproteobacteria</taxon>
        <taxon>Enterobacterales</taxon>
        <taxon>Enterobacteriaceae</taxon>
        <taxon>Klebsiella/Raoultella group</taxon>
        <taxon>Klebsiella</taxon>
        <taxon>Klebsiella pneumoniae complex</taxon>
    </lineage>
</organism>
<proteinExistence type="inferred from homology"/>
<protein>
    <recommendedName>
        <fullName evidence="1">DNA gyrase inhibitor YacG</fullName>
    </recommendedName>
</protein>
<evidence type="ECO:0000255" key="1">
    <source>
        <dbReference type="HAMAP-Rule" id="MF_00649"/>
    </source>
</evidence>
<evidence type="ECO:0000256" key="2">
    <source>
        <dbReference type="SAM" id="MobiDB-lite"/>
    </source>
</evidence>
<sequence>MSEETIVNCPTCGKTVVWGEQSPFRPFCSKRCQLIDLGEWAAEEKRIPSAGDLSDSDDWSEQQP</sequence>
<feature type="chain" id="PRO_1000061467" description="DNA gyrase inhibitor YacG">
    <location>
        <begin position="1"/>
        <end position="64"/>
    </location>
</feature>
<feature type="region of interest" description="Disordered" evidence="2">
    <location>
        <begin position="45"/>
        <end position="64"/>
    </location>
</feature>
<feature type="compositionally biased region" description="Acidic residues" evidence="2">
    <location>
        <begin position="54"/>
        <end position="64"/>
    </location>
</feature>
<feature type="binding site" evidence="1">
    <location>
        <position position="9"/>
    </location>
    <ligand>
        <name>Zn(2+)</name>
        <dbReference type="ChEBI" id="CHEBI:29105"/>
    </ligand>
</feature>
<feature type="binding site" evidence="1">
    <location>
        <position position="12"/>
    </location>
    <ligand>
        <name>Zn(2+)</name>
        <dbReference type="ChEBI" id="CHEBI:29105"/>
    </ligand>
</feature>
<feature type="binding site" evidence="1">
    <location>
        <position position="28"/>
    </location>
    <ligand>
        <name>Zn(2+)</name>
        <dbReference type="ChEBI" id="CHEBI:29105"/>
    </ligand>
</feature>
<feature type="binding site" evidence="1">
    <location>
        <position position="32"/>
    </location>
    <ligand>
        <name>Zn(2+)</name>
        <dbReference type="ChEBI" id="CHEBI:29105"/>
    </ligand>
</feature>
<reference key="1">
    <citation type="submission" date="2006-09" db="EMBL/GenBank/DDBJ databases">
        <authorList>
            <consortium name="The Klebsiella pneumonia Genome Sequencing Project"/>
            <person name="McClelland M."/>
            <person name="Sanderson E.K."/>
            <person name="Spieth J."/>
            <person name="Clifton W.S."/>
            <person name="Latreille P."/>
            <person name="Sabo A."/>
            <person name="Pepin K."/>
            <person name="Bhonagiri V."/>
            <person name="Porwollik S."/>
            <person name="Ali J."/>
            <person name="Wilson R.K."/>
        </authorList>
    </citation>
    <scope>NUCLEOTIDE SEQUENCE [LARGE SCALE GENOMIC DNA]</scope>
    <source>
        <strain>ATCC 700721 / MGH 78578</strain>
    </source>
</reference>
<comment type="function">
    <text evidence="1">Inhibits all the catalytic activities of DNA gyrase by preventing its interaction with DNA. Acts by binding directly to the C-terminal domain of GyrB, which probably disrupts DNA binding by the gyrase.</text>
</comment>
<comment type="cofactor">
    <cofactor evidence="1">
        <name>Zn(2+)</name>
        <dbReference type="ChEBI" id="CHEBI:29105"/>
    </cofactor>
    <text evidence="1">Binds 1 zinc ion.</text>
</comment>
<comment type="subunit">
    <text evidence="1">Interacts with GyrB.</text>
</comment>
<comment type="similarity">
    <text evidence="1">Belongs to the DNA gyrase inhibitor YacG family.</text>
</comment>